<accession>P82955</accession>
<organism evidence="5">
    <name type="scientific">Acinetobacter calcoaceticus</name>
    <dbReference type="NCBI Taxonomy" id="471"/>
    <lineage>
        <taxon>Bacteria</taxon>
        <taxon>Pseudomonadati</taxon>
        <taxon>Pseudomonadota</taxon>
        <taxon>Gammaproteobacteria</taxon>
        <taxon>Moraxellales</taxon>
        <taxon>Moraxellaceae</taxon>
        <taxon>Acinetobacter</taxon>
        <taxon>Acinetobacter calcoaceticus/baumannii complex</taxon>
    </lineage>
</organism>
<feature type="chain" id="PRO_0000166773" description="Alkyl hydroperoxide reductase subunit F">
    <location>
        <begin position="1"/>
        <end position="16" status="greater than"/>
    </location>
</feature>
<feature type="non-terminal residue" evidence="4">
    <location>
        <position position="16"/>
    </location>
</feature>
<evidence type="ECO:0000250" key="1"/>
<evidence type="ECO:0000250" key="2">
    <source>
        <dbReference type="UniProtKB" id="P35340"/>
    </source>
</evidence>
<evidence type="ECO:0000269" key="3">
    <source>
    </source>
</evidence>
<evidence type="ECO:0000303" key="4">
    <source>
    </source>
</evidence>
<evidence type="ECO:0000305" key="5"/>
<name>AHPF_ACICA</name>
<protein>
    <recommendedName>
        <fullName>Alkyl hydroperoxide reductase subunit F</fullName>
        <ecNumber>1.8.1.-</ecNumber>
    </recommendedName>
</protein>
<keyword id="KW-0903">Direct protein sequencing</keyword>
<keyword id="KW-0274">FAD</keyword>
<keyword id="KW-0285">Flavoprotein</keyword>
<keyword id="KW-0520">NAD</keyword>
<keyword id="KW-0521">NADP</keyword>
<keyword id="KW-0560">Oxidoreductase</keyword>
<keyword id="KW-0676">Redox-active center</keyword>
<keyword id="KW-0346">Stress response</keyword>
<reference evidence="5" key="1">
    <citation type="journal article" date="2001" name="FEMS Microbiol. Lett.">
        <title>Protein synthesis patterns in Acinetobacter calcoaceticus induced by phenol and catechol show specificities of responses to chemostress.</title>
        <authorList>
            <person name="Benndorf D."/>
            <person name="Loffhagen N."/>
            <person name="Babel W."/>
        </authorList>
    </citation>
    <scope>PROTEIN SEQUENCE</scope>
    <scope>INDUCTION</scope>
    <source>
        <strain>69-V</strain>
    </source>
</reference>
<sequence>MLDQNIXTQLXAYLER</sequence>
<proteinExistence type="evidence at protein level"/>
<dbReference type="EC" id="1.8.1.-"/>
<dbReference type="GO" id="GO:0016491">
    <property type="term" value="F:oxidoreductase activity"/>
    <property type="evidence" value="ECO:0007669"/>
    <property type="project" value="UniProtKB-KW"/>
</dbReference>
<gene>
    <name type="primary">ahpF</name>
</gene>
<comment type="function">
    <text evidence="1">Serves to protect the cell against DNA damage by alkyl hydroperoxides. It can use either NADH or NADPH as electron donor for direct reduction of redox dyes or of alkyl hydroperoxides when combined with the AhpC protein (By similarity).</text>
</comment>
<comment type="cofactor">
    <cofactor evidence="1">
        <name>FAD</name>
        <dbReference type="ChEBI" id="CHEBI:57692"/>
    </cofactor>
    <text evidence="1">Binds 1 FAD per subunit.</text>
</comment>
<comment type="subunit">
    <text evidence="2">Homodimer.</text>
</comment>
<comment type="induction">
    <text evidence="3">By oxidative stress and catechol, and very weakly by heat shock.</text>
</comment>
<comment type="similarity">
    <text evidence="5">Belongs to the class-II pyridine nucleotide-disulfide oxidoreductase family.</text>
</comment>